<evidence type="ECO:0000250" key="1"/>
<evidence type="ECO:0000255" key="2">
    <source>
        <dbReference type="PROSITE-ProRule" id="PRU00711"/>
    </source>
</evidence>
<evidence type="ECO:0000256" key="3">
    <source>
        <dbReference type="SAM" id="MobiDB-lite"/>
    </source>
</evidence>
<evidence type="ECO:0000305" key="4"/>
<reference key="1">
    <citation type="journal article" date="1996" name="DNA Res.">
        <title>A 570-kb DNA sequence of the Escherichia coli K-12 genome corresponding to the 28.0-40.1 min region on the linkage map.</title>
        <authorList>
            <person name="Aiba H."/>
            <person name="Baba T."/>
            <person name="Fujita K."/>
            <person name="Hayashi K."/>
            <person name="Inada T."/>
            <person name="Isono K."/>
            <person name="Itoh T."/>
            <person name="Kasai H."/>
            <person name="Kashimoto K."/>
            <person name="Kimura S."/>
            <person name="Kitakawa M."/>
            <person name="Kitagawa M."/>
            <person name="Makino K."/>
            <person name="Miki T."/>
            <person name="Mizobuchi K."/>
            <person name="Mori H."/>
            <person name="Mori T."/>
            <person name="Motomura K."/>
            <person name="Nakade S."/>
            <person name="Nakamura Y."/>
            <person name="Nashimoto H."/>
            <person name="Nishio Y."/>
            <person name="Oshima T."/>
            <person name="Saito N."/>
            <person name="Sampei G."/>
            <person name="Seki Y."/>
            <person name="Sivasundaram S."/>
            <person name="Tagami H."/>
            <person name="Takeda J."/>
            <person name="Takemoto K."/>
            <person name="Takeuchi Y."/>
            <person name="Wada C."/>
            <person name="Yamamoto Y."/>
            <person name="Horiuchi T."/>
        </authorList>
    </citation>
    <scope>NUCLEOTIDE SEQUENCE [LARGE SCALE GENOMIC DNA]</scope>
    <source>
        <strain>K12 / W3110 / ATCC 27325 / DSM 5911</strain>
    </source>
</reference>
<reference key="2">
    <citation type="journal article" date="1997" name="Science">
        <title>The complete genome sequence of Escherichia coli K-12.</title>
        <authorList>
            <person name="Blattner F.R."/>
            <person name="Plunkett G. III"/>
            <person name="Bloch C.A."/>
            <person name="Perna N.T."/>
            <person name="Burland V."/>
            <person name="Riley M."/>
            <person name="Collado-Vides J."/>
            <person name="Glasner J.D."/>
            <person name="Rode C.K."/>
            <person name="Mayhew G.F."/>
            <person name="Gregor J."/>
            <person name="Davis N.W."/>
            <person name="Kirkpatrick H.A."/>
            <person name="Goeden M.A."/>
            <person name="Rose D.J."/>
            <person name="Mau B."/>
            <person name="Shao Y."/>
        </authorList>
    </citation>
    <scope>NUCLEOTIDE SEQUENCE [LARGE SCALE GENOMIC DNA]</scope>
    <source>
        <strain>K12 / MG1655 / ATCC 47076</strain>
    </source>
</reference>
<reference key="3">
    <citation type="journal article" date="2006" name="Mol. Syst. Biol.">
        <title>Highly accurate genome sequences of Escherichia coli K-12 strains MG1655 and W3110.</title>
        <authorList>
            <person name="Hayashi K."/>
            <person name="Morooka N."/>
            <person name="Yamamoto Y."/>
            <person name="Fujita K."/>
            <person name="Isono K."/>
            <person name="Choi S."/>
            <person name="Ohtsubo E."/>
            <person name="Baba T."/>
            <person name="Wanner B.L."/>
            <person name="Mori H."/>
            <person name="Horiuchi T."/>
        </authorList>
    </citation>
    <scope>NUCLEOTIDE SEQUENCE [LARGE SCALE GENOMIC DNA]</scope>
    <source>
        <strain>K12 / W3110 / ATCC 27325 / DSM 5911</strain>
    </source>
</reference>
<protein>
    <recommendedName>
        <fullName>Probable anaerobic dimethyl sulfoxide reductase chain YnfG</fullName>
    </recommendedName>
    <alternativeName>
        <fullName>DMSO reductase iron-sulfur subunit YnfG</fullName>
    </alternativeName>
</protein>
<name>YNFG_ECOLI</name>
<comment type="function">
    <text>Electron transfer subunit of the terminal reductase during anaerobic growth on various sulfoxide and N-oxide compounds.</text>
</comment>
<comment type="cofactor">
    <cofactor evidence="1">
        <name>[4Fe-4S] cluster</name>
        <dbReference type="ChEBI" id="CHEBI:49883"/>
    </cofactor>
    <text evidence="1">Binds 4 [4Fe-4S] clusters.</text>
</comment>
<comment type="subunit">
    <text evidence="4">The complex consists of three subunits: YnfF, the reductase; YnfG, an electron transfer protein, and YnfH, a membrane anchor protein.</text>
</comment>
<gene>
    <name type="primary">ynfG</name>
    <name type="ordered locus">b1589</name>
    <name type="ordered locus">JW1581</name>
</gene>
<keyword id="KW-0004">4Fe-4S</keyword>
<keyword id="KW-0249">Electron transport</keyword>
<keyword id="KW-0408">Iron</keyword>
<keyword id="KW-0411">Iron-sulfur</keyword>
<keyword id="KW-0479">Metal-binding</keyword>
<keyword id="KW-1185">Reference proteome</keyword>
<keyword id="KW-0677">Repeat</keyword>
<keyword id="KW-0813">Transport</keyword>
<feature type="initiator methionine" description="Removed" evidence="1">
    <location>
        <position position="1"/>
    </location>
</feature>
<feature type="chain" id="PRO_0000159244" description="Probable anaerobic dimethyl sulfoxide reductase chain YnfG">
    <location>
        <begin position="2"/>
        <end position="205"/>
    </location>
</feature>
<feature type="domain" description="4Fe-4S ferredoxin-type 1" evidence="2">
    <location>
        <begin position="5"/>
        <end position="33"/>
    </location>
</feature>
<feature type="domain" description="4Fe-4S ferredoxin-type 2" evidence="2">
    <location>
        <begin position="59"/>
        <end position="89"/>
    </location>
</feature>
<feature type="domain" description="4Fe-4S ferredoxin-type 3" evidence="2">
    <location>
        <begin position="90"/>
        <end position="119"/>
    </location>
</feature>
<feature type="region of interest" description="Disordered" evidence="3">
    <location>
        <begin position="183"/>
        <end position="205"/>
    </location>
</feature>
<feature type="compositionally biased region" description="Polar residues" evidence="3">
    <location>
        <begin position="186"/>
        <end position="195"/>
    </location>
</feature>
<feature type="binding site" evidence="1">
    <location>
        <position position="14"/>
    </location>
    <ligand>
        <name>[4Fe-4S] cluster</name>
        <dbReference type="ChEBI" id="CHEBI:49883"/>
        <label>1</label>
    </ligand>
</feature>
<feature type="binding site" evidence="1">
    <location>
        <position position="17"/>
    </location>
    <ligand>
        <name>[4Fe-4S] cluster</name>
        <dbReference type="ChEBI" id="CHEBI:49883"/>
        <label>1</label>
    </ligand>
</feature>
<feature type="binding site" evidence="1">
    <location>
        <position position="20"/>
    </location>
    <ligand>
        <name>[4Fe-4S] cluster</name>
        <dbReference type="ChEBI" id="CHEBI:49883"/>
        <label>1</label>
    </ligand>
</feature>
<feature type="binding site" evidence="1">
    <location>
        <position position="24"/>
    </location>
    <ligand>
        <name>[4Fe-4S] cluster</name>
        <dbReference type="ChEBI" id="CHEBI:49883"/>
        <label>2</label>
    </ligand>
</feature>
<feature type="binding site" evidence="1">
    <location>
        <position position="67"/>
    </location>
    <ligand>
        <name>[4Fe-4S] cluster</name>
        <dbReference type="ChEBI" id="CHEBI:49883"/>
        <label>3</label>
    </ligand>
</feature>
<feature type="binding site" evidence="1">
    <location>
        <position position="70"/>
    </location>
    <ligand>
        <name>[4Fe-4S] cluster</name>
        <dbReference type="ChEBI" id="CHEBI:49883"/>
        <label>3</label>
    </ligand>
</feature>
<feature type="binding site" evidence="1">
    <location>
        <position position="75"/>
    </location>
    <ligand>
        <name>[4Fe-4S] cluster</name>
        <dbReference type="ChEBI" id="CHEBI:49883"/>
        <label>3</label>
    </ligand>
</feature>
<feature type="binding site" evidence="1">
    <location>
        <position position="79"/>
    </location>
    <ligand>
        <name>[4Fe-4S] cluster</name>
        <dbReference type="ChEBI" id="CHEBI:49883"/>
        <label>4</label>
    </ligand>
</feature>
<feature type="binding site" evidence="1">
    <location>
        <position position="99"/>
    </location>
    <ligand>
        <name>[4Fe-4S] cluster</name>
        <dbReference type="ChEBI" id="CHEBI:49883"/>
        <label>4</label>
    </ligand>
</feature>
<feature type="binding site" evidence="1">
    <location>
        <position position="102"/>
    </location>
    <ligand>
        <name>[4Fe-4S] cluster</name>
        <dbReference type="ChEBI" id="CHEBI:49883"/>
        <label>4</label>
    </ligand>
</feature>
<feature type="binding site" evidence="1">
    <location>
        <position position="105"/>
    </location>
    <ligand>
        <name>[4Fe-4S] cluster</name>
        <dbReference type="ChEBI" id="CHEBI:49883"/>
        <label>4</label>
    </ligand>
</feature>
<feature type="binding site" evidence="1">
    <location>
        <position position="109"/>
    </location>
    <ligand>
        <name>[4Fe-4S] cluster</name>
        <dbReference type="ChEBI" id="CHEBI:49883"/>
        <label>3</label>
    </ligand>
</feature>
<feature type="binding site" evidence="1">
    <location>
        <position position="126"/>
    </location>
    <ligand>
        <name>[4Fe-4S] cluster</name>
        <dbReference type="ChEBI" id="CHEBI:49883"/>
        <label>2</label>
    </ligand>
</feature>
<feature type="binding site" evidence="1">
    <location>
        <position position="129"/>
    </location>
    <ligand>
        <name>[4Fe-4S] cluster</name>
        <dbReference type="ChEBI" id="CHEBI:49883"/>
        <label>2</label>
    </ligand>
</feature>
<feature type="binding site" evidence="1">
    <location>
        <position position="141"/>
    </location>
    <ligand>
        <name>[4Fe-4S] cluster</name>
        <dbReference type="ChEBI" id="CHEBI:49883"/>
        <label>2</label>
    </ligand>
</feature>
<feature type="binding site" evidence="1">
    <location>
        <position position="145"/>
    </location>
    <ligand>
        <name>[4Fe-4S] cluster</name>
        <dbReference type="ChEBI" id="CHEBI:49883"/>
        <label>1</label>
    </ligand>
</feature>
<proteinExistence type="inferred from homology"/>
<sequence>MTTQYGFFIDSSRCTGCKTCELACKDFKDLGPEVSFRRIYEYAGGDWQEDNGVWHQNVFAYYLSISCNHCDDPACTKVCPSGAMHKREDGFVVVDEDVCIGCRYCHMACPYGAPQYNAEKGHMTKCDGCYSRVAEGKQPICVESCPLRALEFGPIEELRQKHGTLAAVAPLPRAHFTKPNIVIKPNANSRPTGDTTGYLANPEEV</sequence>
<organism>
    <name type="scientific">Escherichia coli (strain K12)</name>
    <dbReference type="NCBI Taxonomy" id="83333"/>
    <lineage>
        <taxon>Bacteria</taxon>
        <taxon>Pseudomonadati</taxon>
        <taxon>Pseudomonadota</taxon>
        <taxon>Gammaproteobacteria</taxon>
        <taxon>Enterobacterales</taxon>
        <taxon>Enterobacteriaceae</taxon>
        <taxon>Escherichia</taxon>
    </lineage>
</organism>
<accession>P0AAJ1</accession>
<accession>P77313</accession>
<dbReference type="EMBL" id="U00096">
    <property type="protein sequence ID" value="AAC74661.1"/>
    <property type="molecule type" value="Genomic_DNA"/>
</dbReference>
<dbReference type="EMBL" id="AP009048">
    <property type="protein sequence ID" value="BAA15313.1"/>
    <property type="molecule type" value="Genomic_DNA"/>
</dbReference>
<dbReference type="PIR" id="G64914">
    <property type="entry name" value="G64914"/>
</dbReference>
<dbReference type="RefSeq" id="NP_416106.1">
    <property type="nucleotide sequence ID" value="NC_000913.3"/>
</dbReference>
<dbReference type="RefSeq" id="WP_000213028.1">
    <property type="nucleotide sequence ID" value="NZ_STEB01000003.1"/>
</dbReference>
<dbReference type="SMR" id="P0AAJ1"/>
<dbReference type="BioGRID" id="4263480">
    <property type="interactions" value="24"/>
</dbReference>
<dbReference type="ComplexPortal" id="CPX-6019">
    <property type="entry name" value="Putative dimethyl sulfoxide reductase"/>
</dbReference>
<dbReference type="DIP" id="DIP-48224N"/>
<dbReference type="FunCoup" id="P0AAJ1">
    <property type="interactions" value="37"/>
</dbReference>
<dbReference type="STRING" id="511145.b1589"/>
<dbReference type="TCDB" id="5.A.3.3.1">
    <property type="family name" value="the prokaryotic molybdopterin-containing oxidoreductase (pmo) family"/>
</dbReference>
<dbReference type="jPOST" id="P0AAJ1"/>
<dbReference type="PaxDb" id="511145-b1589"/>
<dbReference type="EnsemblBacteria" id="AAC74661">
    <property type="protein sequence ID" value="AAC74661"/>
    <property type="gene ID" value="b1589"/>
</dbReference>
<dbReference type="GeneID" id="75204432"/>
<dbReference type="GeneID" id="945638"/>
<dbReference type="KEGG" id="ecj:JW1581"/>
<dbReference type="KEGG" id="eco:b1589"/>
<dbReference type="KEGG" id="ecoc:C3026_09155"/>
<dbReference type="PATRIC" id="fig|1411691.4.peg.673"/>
<dbReference type="EchoBASE" id="EB3606"/>
<dbReference type="eggNOG" id="COG0437">
    <property type="taxonomic scope" value="Bacteria"/>
</dbReference>
<dbReference type="HOGENOM" id="CLU_043374_2_0_6"/>
<dbReference type="InParanoid" id="P0AAJ1"/>
<dbReference type="OMA" id="EMACKDY"/>
<dbReference type="OrthoDB" id="9779457at2"/>
<dbReference type="PhylomeDB" id="P0AAJ1"/>
<dbReference type="BioCyc" id="EcoCyc:G6847-MONOMER"/>
<dbReference type="BioCyc" id="MetaCyc:G6847-MONOMER"/>
<dbReference type="PRO" id="PR:P0AAJ1"/>
<dbReference type="Proteomes" id="UP000000625">
    <property type="component" value="Chromosome"/>
</dbReference>
<dbReference type="GO" id="GO:1990204">
    <property type="term" value="C:oxidoreductase complex"/>
    <property type="evidence" value="ECO:0000303"/>
    <property type="project" value="ComplexPortal"/>
</dbReference>
<dbReference type="GO" id="GO:0051539">
    <property type="term" value="F:4 iron, 4 sulfur cluster binding"/>
    <property type="evidence" value="ECO:0007669"/>
    <property type="project" value="UniProtKB-KW"/>
</dbReference>
<dbReference type="GO" id="GO:0046872">
    <property type="term" value="F:metal ion binding"/>
    <property type="evidence" value="ECO:0007669"/>
    <property type="project" value="UniProtKB-KW"/>
</dbReference>
<dbReference type="GO" id="GO:0009061">
    <property type="term" value="P:anaerobic respiration"/>
    <property type="evidence" value="ECO:0000303"/>
    <property type="project" value="ComplexPortal"/>
</dbReference>
<dbReference type="CDD" id="cd16371">
    <property type="entry name" value="DMSOR_beta_like"/>
    <property type="match status" value="1"/>
</dbReference>
<dbReference type="FunFam" id="3.30.70.20:FF:000003">
    <property type="entry name" value="Dimethyl sulfoxide reductase subunit B"/>
    <property type="match status" value="1"/>
</dbReference>
<dbReference type="Gene3D" id="3.30.70.20">
    <property type="match status" value="2"/>
</dbReference>
<dbReference type="InterPro" id="IPR017896">
    <property type="entry name" value="4Fe4S_Fe-S-bd"/>
</dbReference>
<dbReference type="InterPro" id="IPR017900">
    <property type="entry name" value="4Fe4S_Fe_S_CS"/>
</dbReference>
<dbReference type="InterPro" id="IPR014297">
    <property type="entry name" value="DMSO_DmsB"/>
</dbReference>
<dbReference type="InterPro" id="IPR050954">
    <property type="entry name" value="ET_IronSulfur_Cluster-Binding"/>
</dbReference>
<dbReference type="NCBIfam" id="TIGR02951">
    <property type="entry name" value="DMSO_dmsB"/>
    <property type="match status" value="1"/>
</dbReference>
<dbReference type="PANTHER" id="PTHR43177:SF5">
    <property type="entry name" value="ANAEROBIC DIMETHYL SULFOXIDE REDUCTASE CHAIN B-RELATED"/>
    <property type="match status" value="1"/>
</dbReference>
<dbReference type="PANTHER" id="PTHR43177">
    <property type="entry name" value="PROTEIN NRFC"/>
    <property type="match status" value="1"/>
</dbReference>
<dbReference type="Pfam" id="PF13247">
    <property type="entry name" value="Fer4_11"/>
    <property type="match status" value="1"/>
</dbReference>
<dbReference type="Pfam" id="PF12797">
    <property type="entry name" value="Fer4_2"/>
    <property type="match status" value="1"/>
</dbReference>
<dbReference type="SUPFAM" id="SSF54862">
    <property type="entry name" value="4Fe-4S ferredoxins"/>
    <property type="match status" value="1"/>
</dbReference>
<dbReference type="PROSITE" id="PS00198">
    <property type="entry name" value="4FE4S_FER_1"/>
    <property type="match status" value="1"/>
</dbReference>
<dbReference type="PROSITE" id="PS51379">
    <property type="entry name" value="4FE4S_FER_2"/>
    <property type="match status" value="3"/>
</dbReference>